<evidence type="ECO:0000256" key="1">
    <source>
        <dbReference type="SAM" id="MobiDB-lite"/>
    </source>
</evidence>
<evidence type="ECO:0000305" key="2"/>
<comment type="function">
    <text>Protamines substitute for histones in the chromatin of sperm during the haploid phase of spermatogenesis. They compact sperm DNA into a highly condensed, stable and inactive complex.</text>
</comment>
<comment type="subcellular location">
    <subcellularLocation>
        <location>Nucleus</location>
    </subcellularLocation>
    <subcellularLocation>
        <location>Chromosome</location>
    </subcellularLocation>
</comment>
<comment type="tissue specificity">
    <text>Testis.</text>
</comment>
<comment type="similarity">
    <text evidence="2">Belongs to the protamine P1 family.</text>
</comment>
<keyword id="KW-0158">Chromosome</keyword>
<keyword id="KW-0217">Developmental protein</keyword>
<keyword id="KW-0221">Differentiation</keyword>
<keyword id="KW-0226">DNA condensation</keyword>
<keyword id="KW-0238">DNA-binding</keyword>
<keyword id="KW-0544">Nucleosome core</keyword>
<keyword id="KW-0539">Nucleus</keyword>
<keyword id="KW-0744">Spermatogenesis</keyword>
<feature type="chain" id="PRO_0000191523" description="Sperm protamine P1">
    <location>
        <begin position="1"/>
        <end position="62"/>
    </location>
</feature>
<feature type="region of interest" description="Disordered" evidence="1">
    <location>
        <begin position="1"/>
        <end position="62"/>
    </location>
</feature>
<protein>
    <recommendedName>
        <fullName>Sperm protamine P1</fullName>
    </recommendedName>
</protein>
<gene>
    <name type="primary">PRM1</name>
</gene>
<accession>O18768</accession>
<proteinExistence type="evidence at transcript level"/>
<reference key="1">
    <citation type="journal article" date="1997" name="J. Mammal. Evol.">
        <title>Reconstructing the taxonomic radiation of dasyurine marsupials with cytochrome b, 12S rRNA, and protamine P1 gene trees.</title>
        <authorList>
            <person name="Krajewski C."/>
            <person name="Young J."/>
            <person name="Buckley L."/>
            <person name="Woolley P.A."/>
            <person name="Westerman M."/>
        </authorList>
    </citation>
    <scope>NUCLEOTIDE SEQUENCE [GENOMIC DNA]</scope>
</reference>
<sequence length="62" mass="8553">MARYRRHSRSRSRSRYRRRRRRRSRHRNRRRTYRRSRRHSRRRRGRRRGYSRRRYSRRGRRR</sequence>
<dbReference type="EMBL" id="AF010277">
    <property type="protein sequence ID" value="AAB69307.1"/>
    <property type="molecule type" value="Genomic_DNA"/>
</dbReference>
<dbReference type="GO" id="GO:0000786">
    <property type="term" value="C:nucleosome"/>
    <property type="evidence" value="ECO:0007669"/>
    <property type="project" value="UniProtKB-KW"/>
</dbReference>
<dbReference type="GO" id="GO:0005634">
    <property type="term" value="C:nucleus"/>
    <property type="evidence" value="ECO:0007669"/>
    <property type="project" value="UniProtKB-SubCell"/>
</dbReference>
<dbReference type="GO" id="GO:0003677">
    <property type="term" value="F:DNA binding"/>
    <property type="evidence" value="ECO:0007669"/>
    <property type="project" value="UniProtKB-KW"/>
</dbReference>
<dbReference type="GO" id="GO:0030261">
    <property type="term" value="P:chromosome condensation"/>
    <property type="evidence" value="ECO:0007669"/>
    <property type="project" value="UniProtKB-KW"/>
</dbReference>
<dbReference type="GO" id="GO:0035092">
    <property type="term" value="P:sperm DNA condensation"/>
    <property type="evidence" value="ECO:0007669"/>
    <property type="project" value="InterPro"/>
</dbReference>
<dbReference type="InterPro" id="IPR000221">
    <property type="entry name" value="Protamine_P1"/>
</dbReference>
<dbReference type="PROSITE" id="PS00048">
    <property type="entry name" value="PROTAMINE_P1"/>
    <property type="match status" value="1"/>
</dbReference>
<name>HSP1_PSEBA</name>
<organism>
    <name type="scientific">Pseudantechinus bilarni</name>
    <name type="common">Sandstone dibbler</name>
    <name type="synonym">Parantechinus bilarni</name>
    <dbReference type="NCBI Taxonomy" id="479705"/>
    <lineage>
        <taxon>Eukaryota</taxon>
        <taxon>Metazoa</taxon>
        <taxon>Chordata</taxon>
        <taxon>Craniata</taxon>
        <taxon>Vertebrata</taxon>
        <taxon>Euteleostomi</taxon>
        <taxon>Mammalia</taxon>
        <taxon>Metatheria</taxon>
        <taxon>Dasyuromorphia</taxon>
        <taxon>Dasyuridae</taxon>
        <taxon>Pseudantechinus</taxon>
    </lineage>
</organism>